<protein>
    <recommendedName>
        <fullName>Sodium/potassium/calcium exchanger 1</fullName>
    </recommendedName>
    <alternativeName>
        <fullName>Na(+)/K(+)/Ca(2+)-exchange protein 1</fullName>
    </alternativeName>
    <alternativeName>
        <fullName>Retinal rod Na-Ca+K exchanger</fullName>
    </alternativeName>
    <alternativeName>
        <fullName>Solute carrier family 24 member 1</fullName>
    </alternativeName>
</protein>
<feature type="chain" id="PRO_0000455293" description="Sodium/potassium/calcium exchanger 1">
    <location>
        <begin position="1"/>
        <end position="1130"/>
    </location>
</feature>
<feature type="signal peptide" description="Not cleaved" evidence="2">
    <location>
        <begin position="1"/>
        <end status="unknown"/>
    </location>
</feature>
<feature type="topological domain" description="Extracellular" evidence="5">
    <location>
        <begin position="1"/>
        <end position="419"/>
    </location>
</feature>
<feature type="transmembrane region" description="Helical" evidence="3">
    <location>
        <begin position="420"/>
        <end position="440"/>
    </location>
</feature>
<feature type="topological domain" description="Cytoplasmic" evidence="5">
    <location>
        <begin position="441"/>
        <end position="464"/>
    </location>
</feature>
<feature type="transmembrane region" description="Helical" evidence="3">
    <location>
        <begin position="465"/>
        <end position="485"/>
    </location>
</feature>
<feature type="topological domain" description="Extracellular" evidence="5">
    <location>
        <begin position="486"/>
        <end position="489"/>
    </location>
</feature>
<feature type="transmembrane region" description="Helical" evidence="3">
    <location>
        <begin position="490"/>
        <end position="510"/>
    </location>
</feature>
<feature type="topological domain" description="Cytoplasmic" evidence="5">
    <location>
        <begin position="511"/>
        <end position="530"/>
    </location>
</feature>
<feature type="transmembrane region" description="Helical" evidence="3">
    <location>
        <begin position="531"/>
        <end position="551"/>
    </location>
</feature>
<feature type="topological domain" description="Extracellular" evidence="5">
    <location>
        <position position="552"/>
    </location>
</feature>
<feature type="transmembrane region" description="Helical" evidence="3">
    <location>
        <begin position="553"/>
        <end position="573"/>
    </location>
</feature>
<feature type="topological domain" description="Cytoplasmic" evidence="5">
    <location>
        <begin position="574"/>
        <end position="938"/>
    </location>
</feature>
<feature type="transmembrane region" description="Helical" evidence="3">
    <location>
        <begin position="939"/>
        <end position="959"/>
    </location>
</feature>
<feature type="topological domain" description="Extracellular" evidence="5">
    <location>
        <begin position="960"/>
        <end position="966"/>
    </location>
</feature>
<feature type="transmembrane region" description="Helical" evidence="3">
    <location>
        <begin position="967"/>
        <end position="987"/>
    </location>
</feature>
<feature type="topological domain" description="Cytoplasmic" evidence="5">
    <location>
        <begin position="988"/>
        <end position="1002"/>
    </location>
</feature>
<feature type="transmembrane region" description="Helical" evidence="3">
    <location>
        <begin position="1003"/>
        <end position="1023"/>
    </location>
</feature>
<feature type="topological domain" description="Extracellular" evidence="5">
    <location>
        <begin position="1024"/>
        <end position="1041"/>
    </location>
</feature>
<feature type="transmembrane region" description="Helical" evidence="3">
    <location>
        <begin position="1042"/>
        <end position="1062"/>
    </location>
</feature>
<feature type="topological domain" description="Cytoplasmic" evidence="5">
    <location>
        <begin position="1063"/>
        <end position="1070"/>
    </location>
</feature>
<feature type="transmembrane region" description="Helical" evidence="3">
    <location>
        <begin position="1071"/>
        <end position="1091"/>
    </location>
</feature>
<feature type="topological domain" description="Extracellular" evidence="5">
    <location>
        <begin position="1092"/>
        <end position="1099"/>
    </location>
</feature>
<feature type="transmembrane region" description="Helical" evidence="3">
    <location>
        <begin position="1100"/>
        <end position="1120"/>
    </location>
</feature>
<feature type="topological domain" description="Cytoplasmic" evidence="5">
    <location>
        <begin position="1121"/>
        <end position="1130"/>
    </location>
</feature>
<feature type="repeat" description="Alpha-1" evidence="5">
    <location>
        <begin position="461"/>
        <end position="501"/>
    </location>
</feature>
<feature type="repeat" description="Alpha-2" evidence="5">
    <location>
        <begin position="1010"/>
        <end position="1041"/>
    </location>
</feature>
<feature type="region of interest" description="Disordered" evidence="4">
    <location>
        <begin position="104"/>
        <end position="209"/>
    </location>
</feature>
<feature type="region of interest" description="Disordered" evidence="4">
    <location>
        <begin position="274"/>
        <end position="295"/>
    </location>
</feature>
<feature type="region of interest" description="Disordered" evidence="4">
    <location>
        <begin position="598"/>
        <end position="619"/>
    </location>
</feature>
<feature type="region of interest" description="Disordered" evidence="4">
    <location>
        <begin position="650"/>
        <end position="932"/>
    </location>
</feature>
<feature type="compositionally biased region" description="Polar residues" evidence="4">
    <location>
        <begin position="125"/>
        <end position="136"/>
    </location>
</feature>
<feature type="compositionally biased region" description="Basic and acidic residues" evidence="4">
    <location>
        <begin position="170"/>
        <end position="187"/>
    </location>
</feature>
<feature type="compositionally biased region" description="Polar residues" evidence="4">
    <location>
        <begin position="286"/>
        <end position="295"/>
    </location>
</feature>
<feature type="compositionally biased region" description="Polar residues" evidence="4">
    <location>
        <begin position="661"/>
        <end position="675"/>
    </location>
</feature>
<feature type="compositionally biased region" description="Acidic residues" evidence="4">
    <location>
        <begin position="703"/>
        <end position="715"/>
    </location>
</feature>
<feature type="compositionally biased region" description="Basic and acidic residues" evidence="4">
    <location>
        <begin position="730"/>
        <end position="751"/>
    </location>
</feature>
<feature type="compositionally biased region" description="Acidic residues" evidence="4">
    <location>
        <begin position="766"/>
        <end position="782"/>
    </location>
</feature>
<feature type="compositionally biased region" description="Acidic residues" evidence="4">
    <location>
        <begin position="802"/>
        <end position="820"/>
    </location>
</feature>
<feature type="compositionally biased region" description="Basic and acidic residues" evidence="4">
    <location>
        <begin position="833"/>
        <end position="855"/>
    </location>
</feature>
<feature type="compositionally biased region" description="Acidic residues" evidence="4">
    <location>
        <begin position="870"/>
        <end position="880"/>
    </location>
</feature>
<feature type="compositionally biased region" description="Acidic residues" evidence="4">
    <location>
        <begin position="896"/>
        <end position="928"/>
    </location>
</feature>
<feature type="modified residue" description="Phosphoserine" evidence="3">
    <location>
        <position position="625"/>
    </location>
</feature>
<feature type="modified residue" description="Phosphothreonine" evidence="1">
    <location>
        <position position="690"/>
    </location>
</feature>
<feature type="glycosylation site" description="N-linked (GlcNAc...) asparagine" evidence="3">
    <location>
        <position position="176"/>
    </location>
</feature>
<feature type="glycosylation site" description="N-linked (GlcNAc...) asparagine" evidence="3">
    <location>
        <position position="273"/>
    </location>
</feature>
<keyword id="KW-0050">Antiport</keyword>
<keyword id="KW-0106">Calcium</keyword>
<keyword id="KW-0109">Calcium transport</keyword>
<keyword id="KW-1003">Cell membrane</keyword>
<keyword id="KW-0325">Glycoprotein</keyword>
<keyword id="KW-0406">Ion transport</keyword>
<keyword id="KW-0472">Membrane</keyword>
<keyword id="KW-0597">Phosphoprotein</keyword>
<keyword id="KW-1185">Reference proteome</keyword>
<keyword id="KW-0677">Repeat</keyword>
<keyword id="KW-0716">Sensory transduction</keyword>
<keyword id="KW-0732">Signal</keyword>
<keyword id="KW-0769">Symport</keyword>
<keyword id="KW-0812">Transmembrane</keyword>
<keyword id="KW-1133">Transmembrane helix</keyword>
<keyword id="KW-0813">Transport</keyword>
<keyword id="KW-0844">Vision</keyword>
<dbReference type="EMBL" id="BC016094">
    <property type="protein sequence ID" value="AAH16094.1"/>
    <property type="molecule type" value="mRNA"/>
</dbReference>
<dbReference type="CCDS" id="CCDS23283.1"/>
<dbReference type="RefSeq" id="NP_659062.1">
    <property type="nucleotide sequence ID" value="NM_144813.3"/>
</dbReference>
<dbReference type="RefSeq" id="XP_017168760.1">
    <property type="nucleotide sequence ID" value="XM_017313271.2"/>
</dbReference>
<dbReference type="FunCoup" id="Q91WD8">
    <property type="interactions" value="48"/>
</dbReference>
<dbReference type="STRING" id="10090.ENSMUSP00000035616"/>
<dbReference type="GlyCosmos" id="Q91WD8">
    <property type="glycosylation" value="2 sites, No reported glycans"/>
</dbReference>
<dbReference type="GlyGen" id="Q91WD8">
    <property type="glycosylation" value="4 sites"/>
</dbReference>
<dbReference type="iPTMnet" id="Q91WD8"/>
<dbReference type="PhosphoSitePlus" id="Q91WD8"/>
<dbReference type="PaxDb" id="10090-ENSMUSP00000035616"/>
<dbReference type="ProteomicsDB" id="340913"/>
<dbReference type="Antibodypedia" id="26029">
    <property type="antibodies" value="129 antibodies from 23 providers"/>
</dbReference>
<dbReference type="DNASU" id="214111"/>
<dbReference type="Ensembl" id="ENSMUST00000037798.8">
    <property type="protein sequence ID" value="ENSMUSP00000035616.8"/>
    <property type="gene ID" value="ENSMUSG00000034452.8"/>
</dbReference>
<dbReference type="GeneID" id="214111"/>
<dbReference type="KEGG" id="mmu:214111"/>
<dbReference type="UCSC" id="uc009qcl.1">
    <property type="organism name" value="mouse"/>
</dbReference>
<dbReference type="AGR" id="MGI:2384871"/>
<dbReference type="CTD" id="9187"/>
<dbReference type="MGI" id="MGI:2384871">
    <property type="gene designation" value="Slc24a1"/>
</dbReference>
<dbReference type="VEuPathDB" id="HostDB:ENSMUSG00000034452"/>
<dbReference type="eggNOG" id="KOG1307">
    <property type="taxonomic scope" value="Eukaryota"/>
</dbReference>
<dbReference type="GeneTree" id="ENSGT01030000234532"/>
<dbReference type="HOGENOM" id="CLU_007948_6_0_1"/>
<dbReference type="InParanoid" id="Q91WD8"/>
<dbReference type="OMA" id="HNSTIRT"/>
<dbReference type="OrthoDB" id="2127281at2759"/>
<dbReference type="PhylomeDB" id="Q91WD8"/>
<dbReference type="TreeFam" id="TF318759"/>
<dbReference type="Reactome" id="R-MMU-425561">
    <property type="pathway name" value="Sodium/Calcium exchangers"/>
</dbReference>
<dbReference type="BioGRID-ORCS" id="214111">
    <property type="hits" value="6 hits in 79 CRISPR screens"/>
</dbReference>
<dbReference type="PRO" id="PR:Q91WD8"/>
<dbReference type="Proteomes" id="UP000000589">
    <property type="component" value="Chromosome 9"/>
</dbReference>
<dbReference type="RNAct" id="Q91WD8">
    <property type="molecule type" value="protein"/>
</dbReference>
<dbReference type="Bgee" id="ENSMUSG00000034452">
    <property type="expression patterns" value="Expressed in retinal neural layer and 19 other cell types or tissues"/>
</dbReference>
<dbReference type="GO" id="GO:0005886">
    <property type="term" value="C:plasma membrane"/>
    <property type="evidence" value="ECO:0007669"/>
    <property type="project" value="UniProtKB-SubCell"/>
</dbReference>
<dbReference type="GO" id="GO:0008273">
    <property type="term" value="F:calcium, potassium:sodium antiporter activity"/>
    <property type="evidence" value="ECO:0007669"/>
    <property type="project" value="Ensembl"/>
</dbReference>
<dbReference type="GO" id="GO:0015293">
    <property type="term" value="F:symporter activity"/>
    <property type="evidence" value="ECO:0007669"/>
    <property type="project" value="UniProtKB-KW"/>
</dbReference>
<dbReference type="GO" id="GO:0006874">
    <property type="term" value="P:intracellular calcium ion homeostasis"/>
    <property type="evidence" value="ECO:0007669"/>
    <property type="project" value="Ensembl"/>
</dbReference>
<dbReference type="GO" id="GO:0007601">
    <property type="term" value="P:visual perception"/>
    <property type="evidence" value="ECO:0007669"/>
    <property type="project" value="UniProtKB-KW"/>
</dbReference>
<dbReference type="FunFam" id="1.20.1420.30:FF:000002">
    <property type="entry name" value="Sodium/potassium/calcium exchanger 2 isoform 1"/>
    <property type="match status" value="1"/>
</dbReference>
<dbReference type="FunFam" id="1.20.1420.30:FF:000004">
    <property type="entry name" value="Sodium/potassium/calcium exchanger 2 isoform 1"/>
    <property type="match status" value="1"/>
</dbReference>
<dbReference type="Gene3D" id="1.20.1420.30">
    <property type="entry name" value="NCX, central ion-binding region"/>
    <property type="match status" value="2"/>
</dbReference>
<dbReference type="InterPro" id="IPR004481">
    <property type="entry name" value="K/Na/Ca-exchanger"/>
</dbReference>
<dbReference type="InterPro" id="IPR004837">
    <property type="entry name" value="NaCa_Exmemb"/>
</dbReference>
<dbReference type="InterPro" id="IPR044880">
    <property type="entry name" value="NCX_ion-bd_dom_sf"/>
</dbReference>
<dbReference type="InterPro" id="IPR004817">
    <property type="entry name" value="SLC24A1"/>
</dbReference>
<dbReference type="NCBIfam" id="TIGR00927">
    <property type="entry name" value="2A1904"/>
    <property type="match status" value="2"/>
</dbReference>
<dbReference type="NCBIfam" id="TIGR00367">
    <property type="entry name" value="calcium/sodium antiporter"/>
    <property type="match status" value="1"/>
</dbReference>
<dbReference type="PANTHER" id="PTHR10846">
    <property type="entry name" value="SODIUM/POTASSIUM/CALCIUM EXCHANGER"/>
    <property type="match status" value="1"/>
</dbReference>
<dbReference type="PANTHER" id="PTHR10846:SF36">
    <property type="entry name" value="SODIUM_POTASSIUM_CALCIUM EXCHANGER 1"/>
    <property type="match status" value="1"/>
</dbReference>
<dbReference type="Pfam" id="PF01699">
    <property type="entry name" value="Na_Ca_ex"/>
    <property type="match status" value="2"/>
</dbReference>
<evidence type="ECO:0000250" key="1">
    <source>
        <dbReference type="UniProtKB" id="O60721"/>
    </source>
</evidence>
<evidence type="ECO:0000250" key="2">
    <source>
        <dbReference type="UniProtKB" id="Q28139"/>
    </source>
</evidence>
<evidence type="ECO:0000255" key="3"/>
<evidence type="ECO:0000256" key="4">
    <source>
        <dbReference type="SAM" id="MobiDB-lite"/>
    </source>
</evidence>
<evidence type="ECO:0000305" key="5"/>
<evidence type="ECO:0000312" key="6">
    <source>
        <dbReference type="MGI" id="MGI:2384871"/>
    </source>
</evidence>
<accession>Q91WD8</accession>
<organism>
    <name type="scientific">Mus musculus</name>
    <name type="common">Mouse</name>
    <dbReference type="NCBI Taxonomy" id="10090"/>
    <lineage>
        <taxon>Eukaryota</taxon>
        <taxon>Metazoa</taxon>
        <taxon>Chordata</taxon>
        <taxon>Craniata</taxon>
        <taxon>Vertebrata</taxon>
        <taxon>Euteleostomi</taxon>
        <taxon>Mammalia</taxon>
        <taxon>Eutheria</taxon>
        <taxon>Euarchontoglires</taxon>
        <taxon>Glires</taxon>
        <taxon>Rodentia</taxon>
        <taxon>Myomorpha</taxon>
        <taxon>Muroidea</taxon>
        <taxon>Muridae</taxon>
        <taxon>Murinae</taxon>
        <taxon>Mus</taxon>
        <taxon>Mus</taxon>
    </lineage>
</organism>
<comment type="function">
    <text evidence="1">Calcium, potassium:sodium antiporter that transports 1 Ca(2+) and 1 K(+) in exchange for 4 Na(+). Critical component of the visual transduction cascade, controlling the calcium concentration of outer segments during light and darkness. Light causes a rapid lowering of cytosolic free calcium in the outer segment of both retinal rod and cone photoreceptors and the light-induced lowering of calcium is caused by extrusion via this protein which plays a key role in the process of light adaptation.</text>
</comment>
<comment type="catalytic activity">
    <reaction evidence="2">
        <text>Ca(2+)(out) + K(+)(out) + 4 Na(+)(in) = Ca(2+)(in) + K(+)(in) + 4 Na(+)(out)</text>
        <dbReference type="Rhea" id="RHEA:69967"/>
        <dbReference type="ChEBI" id="CHEBI:29101"/>
        <dbReference type="ChEBI" id="CHEBI:29103"/>
        <dbReference type="ChEBI" id="CHEBI:29108"/>
    </reaction>
</comment>
<comment type="subcellular location">
    <subcellularLocation>
        <location evidence="2">Cell membrane</location>
        <topology evidence="3">Multi-pass membrane protein</topology>
    </subcellularLocation>
</comment>
<comment type="PTM">
    <text evidence="2">The uncleaved signal sequence is required for efficient membrane targeting and proper membrane integration and topology.</text>
</comment>
<comment type="similarity">
    <text evidence="5">Belongs to the Ca(2+):cation antiporter (CaCA) (TC 2.A.19) family. SLC24A subfamily.</text>
</comment>
<gene>
    <name evidence="6" type="primary">Slc24a1</name>
    <name type="synonym">Nckx1</name>
</gene>
<name>NCKX1_MOUSE</name>
<sequence length="1130" mass="124667">MGKLIRMGTQERRLLRPKRLHWSRLLFLLGMLIIGSTYQHLRRPQNPPSMWTKVSSQQPIKLAVRDLPNNEMAVAGSDPPEASSEVEDGMLAAQDTVIMDEAAPSIAMEDTPNPPRTTKIPPASLKNSYSPTTAGTRRQKENIPPTPSGAPSHFISTPGRQRVKSYIPKPRGERKNSSPTHAREKGRTHTPSPAGAHTISPTATVRDRETMATYRLLETRFERTAGETTAASLKRMVLNTPTFLTHEVETNLMTSSSLVGKNTAVSLRKGERNISTTPQGAVPQHTPATSEEQMTVSTRMGSIPATIEGSTAARRINNPLSRTSAPAIRIASATNREKRPSTAPSTLVTPKATMSTQVHRCVVVEPAPAVPMTPSPGVTSILFPETPSSGPSALPPGWPNLHPKAEYPPDLFSVEDRRQGWVVLHIFGMMYVFVALAIVCDEYFVPALGVITHKLQISEDVAGATFMAAGGSAPELFTSLIGVFISHSNVGIGTIVGSAVFNILFVIGTCALFSREILNLTWWPLFRDVSFYILDLSMLIVFFLDSFIAWWESLLLLLAYALYVFTMKWNKQIELWVKEQLSRRPVAKVMALGDLSKPSEDAVEENEQQDSKKLKLPSVLTRGSSSASLHNSIIRNTIYHLMLHSLDPLGEARPSKDKQESLNQEARVLSQTKAESSPDEDEPAELPAVTVTPAPAPDAKGDQEDDPGCQEDVDEAERRGEMTGEEGEKETETEGKKDEQEGETEAERKEDEQEEETEAEGKEQEGETEAEGKEDEQEGETEAEGKKDEQEGETEAEGKEEQEGETEAEGKEDEQEGETEAEGKEEQEGETEAESKEVEQERETEAEGKDKHEGQGETQPDDTEVKDGEGETEANAEDQCEATQGEKGADGGGESDGGDSEEEEDEEDEEEEEEEDEEEEEEENEEPLSLEWPDSRQKQAIYLFLLPIVFPLWLTIPDVRRQESRKFFVITFLGSIIWIAMFSYLMVWWAHQVGETIGISEEIMGLTILAAGTSIPDLITSVIVARKGLGDMAVSSSVGSNIFDITVGLPVPWLLFSLINALQPVPVSSNGLFCAIVLLFLMLLFVIFSIASCKWRMNKILGFTMFLLYFVFLVISVMLEDRIISCPVSV</sequence>
<reference key="1">
    <citation type="journal article" date="2009" name="PLoS Biol.">
        <title>Lineage-specific biology revealed by a finished genome assembly of the mouse.</title>
        <authorList>
            <person name="Church D.M."/>
            <person name="Goodstadt L."/>
            <person name="Hillier L.W."/>
            <person name="Zody M.C."/>
            <person name="Goldstein S."/>
            <person name="She X."/>
            <person name="Bult C.J."/>
            <person name="Agarwala R."/>
            <person name="Cherry J.L."/>
            <person name="DiCuccio M."/>
            <person name="Hlavina W."/>
            <person name="Kapustin Y."/>
            <person name="Meric P."/>
            <person name="Maglott D."/>
            <person name="Birtle Z."/>
            <person name="Marques A.C."/>
            <person name="Graves T."/>
            <person name="Zhou S."/>
            <person name="Teague B."/>
            <person name="Potamousis K."/>
            <person name="Churas C."/>
            <person name="Place M."/>
            <person name="Herschleb J."/>
            <person name="Runnheim R."/>
            <person name="Forrest D."/>
            <person name="Amos-Landgraf J."/>
            <person name="Schwartz D.C."/>
            <person name="Cheng Z."/>
            <person name="Lindblad-Toh K."/>
            <person name="Eichler E.E."/>
            <person name="Ponting C.P."/>
        </authorList>
    </citation>
    <scope>NUCLEOTIDE SEQUENCE [LARGE SCALE GENOMIC DNA]</scope>
    <source>
        <strain>C57BL/6J</strain>
    </source>
</reference>
<reference key="2">
    <citation type="journal article" date="2004" name="Genome Res.">
        <title>The status, quality, and expansion of the NIH full-length cDNA project: the Mammalian Gene Collection (MGC).</title>
        <authorList>
            <consortium name="The MGC Project Team"/>
        </authorList>
    </citation>
    <scope>NUCLEOTIDE SEQUENCE [LARGE SCALE MRNA]</scope>
    <source>
        <tissue>Eye</tissue>
    </source>
</reference>
<proteinExistence type="evidence at transcript level"/>